<keyword id="KW-0963">Cytoplasm</keyword>
<keyword id="KW-0342">GTP-binding</keyword>
<keyword id="KW-0378">Hydrolase</keyword>
<keyword id="KW-0460">Magnesium</keyword>
<keyword id="KW-0479">Metal-binding</keyword>
<keyword id="KW-0547">Nucleotide-binding</keyword>
<proteinExistence type="inferred from homology"/>
<reference key="1">
    <citation type="journal article" date="2006" name="Genome Biol.">
        <title>The genome of Rhizobium leguminosarum has recognizable core and accessory components.</title>
        <authorList>
            <person name="Young J.P.W."/>
            <person name="Crossman L.C."/>
            <person name="Johnston A.W.B."/>
            <person name="Thomson N.R."/>
            <person name="Ghazoui Z.F."/>
            <person name="Hull K.H."/>
            <person name="Wexler M."/>
            <person name="Curson A.R.J."/>
            <person name="Todd J.D."/>
            <person name="Poole P.S."/>
            <person name="Mauchline T.H."/>
            <person name="East A.K."/>
            <person name="Quail M.A."/>
            <person name="Churcher C."/>
            <person name="Arrowsmith C."/>
            <person name="Cherevach I."/>
            <person name="Chillingworth T."/>
            <person name="Clarke K."/>
            <person name="Cronin A."/>
            <person name="Davis P."/>
            <person name="Fraser A."/>
            <person name="Hance Z."/>
            <person name="Hauser H."/>
            <person name="Jagels K."/>
            <person name="Moule S."/>
            <person name="Mungall K."/>
            <person name="Norbertczak H."/>
            <person name="Rabbinowitsch E."/>
            <person name="Sanders M."/>
            <person name="Simmonds M."/>
            <person name="Whitehead S."/>
            <person name="Parkhill J."/>
        </authorList>
    </citation>
    <scope>NUCLEOTIDE SEQUENCE [LARGE SCALE GENOMIC DNA]</scope>
    <source>
        <strain>DSM 114642 / LMG 32736 / 3841</strain>
    </source>
</reference>
<evidence type="ECO:0000255" key="1">
    <source>
        <dbReference type="HAMAP-Rule" id="MF_01454"/>
    </source>
</evidence>
<evidence type="ECO:0000255" key="2">
    <source>
        <dbReference type="PROSITE-ProRule" id="PRU01231"/>
    </source>
</evidence>
<evidence type="ECO:0000256" key="3">
    <source>
        <dbReference type="SAM" id="MobiDB-lite"/>
    </source>
</evidence>
<name>OBG_RHIJ3</name>
<feature type="chain" id="PRO_0000386178" description="GTPase Obg">
    <location>
        <begin position="1"/>
        <end position="364"/>
    </location>
</feature>
<feature type="domain" description="Obg" evidence="2">
    <location>
        <begin position="1"/>
        <end position="159"/>
    </location>
</feature>
<feature type="domain" description="OBG-type G" evidence="1">
    <location>
        <begin position="160"/>
        <end position="327"/>
    </location>
</feature>
<feature type="region of interest" description="Disordered" evidence="3">
    <location>
        <begin position="333"/>
        <end position="364"/>
    </location>
</feature>
<feature type="binding site" evidence="1">
    <location>
        <begin position="166"/>
        <end position="173"/>
    </location>
    <ligand>
        <name>GTP</name>
        <dbReference type="ChEBI" id="CHEBI:37565"/>
    </ligand>
</feature>
<feature type="binding site" evidence="1">
    <location>
        <position position="173"/>
    </location>
    <ligand>
        <name>Mg(2+)</name>
        <dbReference type="ChEBI" id="CHEBI:18420"/>
    </ligand>
</feature>
<feature type="binding site" evidence="1">
    <location>
        <begin position="191"/>
        <end position="195"/>
    </location>
    <ligand>
        <name>GTP</name>
        <dbReference type="ChEBI" id="CHEBI:37565"/>
    </ligand>
</feature>
<feature type="binding site" evidence="1">
    <location>
        <position position="193"/>
    </location>
    <ligand>
        <name>Mg(2+)</name>
        <dbReference type="ChEBI" id="CHEBI:18420"/>
    </ligand>
</feature>
<feature type="binding site" evidence="1">
    <location>
        <begin position="212"/>
        <end position="215"/>
    </location>
    <ligand>
        <name>GTP</name>
        <dbReference type="ChEBI" id="CHEBI:37565"/>
    </ligand>
</feature>
<feature type="binding site" evidence="1">
    <location>
        <begin position="279"/>
        <end position="282"/>
    </location>
    <ligand>
        <name>GTP</name>
        <dbReference type="ChEBI" id="CHEBI:37565"/>
    </ligand>
</feature>
<feature type="binding site" evidence="1">
    <location>
        <begin position="308"/>
        <end position="310"/>
    </location>
    <ligand>
        <name>GTP</name>
        <dbReference type="ChEBI" id="CHEBI:37565"/>
    </ligand>
</feature>
<sequence>MKFLDEAKVYIKSGDGGGGSVSFRREKFIEFGGPDGGDGGRGGDVWVEAVNGLNTLIDFRYQQHFKATIGTHGMGRNRTGANGSDVTLKVPVGTQIFEEDQETLICDLTVEGQRYCLAHGGNGGFGNAHFKTSTNQAPDWANPGLPGEEKTIWLHLKLIADAGLVGLPNAGKSTFLASVTRARPKIANYPFTTLHPNLGVATIDEREFILADIPGLIEGAHEGVGIGDRFLGHVERTRVLLHLISAQEEKVGKAYKTVKHELEAYGNELTDKAEIVALSQIDVLDDAELKKKTKELAKACGKTPFQISAVTGKGMTEVLRALRDIIVEANTEEKPAKVPKLRHRDMVVTDEGEDKGGDEGDDQP</sequence>
<gene>
    <name evidence="1" type="primary">obg</name>
    <name type="ordered locus">RL4681</name>
</gene>
<protein>
    <recommendedName>
        <fullName evidence="1">GTPase Obg</fullName>
        <ecNumber evidence="1">3.6.5.-</ecNumber>
    </recommendedName>
    <alternativeName>
        <fullName evidence="1">GTP-binding protein Obg</fullName>
    </alternativeName>
</protein>
<comment type="function">
    <text evidence="1">An essential GTPase which binds GTP, GDP and possibly (p)ppGpp with moderate affinity, with high nucleotide exchange rates and a fairly low GTP hydrolysis rate. Plays a role in control of the cell cycle, stress response, ribosome biogenesis and in those bacteria that undergo differentiation, in morphogenesis control.</text>
</comment>
<comment type="cofactor">
    <cofactor evidence="1">
        <name>Mg(2+)</name>
        <dbReference type="ChEBI" id="CHEBI:18420"/>
    </cofactor>
</comment>
<comment type="subunit">
    <text evidence="1">Monomer.</text>
</comment>
<comment type="subcellular location">
    <subcellularLocation>
        <location evidence="1">Cytoplasm</location>
    </subcellularLocation>
</comment>
<comment type="similarity">
    <text evidence="1">Belongs to the TRAFAC class OBG-HflX-like GTPase superfamily. OBG GTPase family.</text>
</comment>
<accession>Q1MA76</accession>
<dbReference type="EC" id="3.6.5.-" evidence="1"/>
<dbReference type="EMBL" id="AM236080">
    <property type="protein sequence ID" value="CAK10164.1"/>
    <property type="molecule type" value="Genomic_DNA"/>
</dbReference>
<dbReference type="SMR" id="Q1MA76"/>
<dbReference type="EnsemblBacteria" id="CAK10164">
    <property type="protein sequence ID" value="CAK10164"/>
    <property type="gene ID" value="RL4681"/>
</dbReference>
<dbReference type="KEGG" id="rle:RL4681"/>
<dbReference type="eggNOG" id="COG0536">
    <property type="taxonomic scope" value="Bacteria"/>
</dbReference>
<dbReference type="HOGENOM" id="CLU_011747_2_0_5"/>
<dbReference type="Proteomes" id="UP000006575">
    <property type="component" value="Chromosome"/>
</dbReference>
<dbReference type="GO" id="GO:0005737">
    <property type="term" value="C:cytoplasm"/>
    <property type="evidence" value="ECO:0007669"/>
    <property type="project" value="UniProtKB-SubCell"/>
</dbReference>
<dbReference type="GO" id="GO:0005525">
    <property type="term" value="F:GTP binding"/>
    <property type="evidence" value="ECO:0007669"/>
    <property type="project" value="UniProtKB-UniRule"/>
</dbReference>
<dbReference type="GO" id="GO:0003924">
    <property type="term" value="F:GTPase activity"/>
    <property type="evidence" value="ECO:0007669"/>
    <property type="project" value="UniProtKB-UniRule"/>
</dbReference>
<dbReference type="GO" id="GO:0000287">
    <property type="term" value="F:magnesium ion binding"/>
    <property type="evidence" value="ECO:0007669"/>
    <property type="project" value="InterPro"/>
</dbReference>
<dbReference type="GO" id="GO:0042254">
    <property type="term" value="P:ribosome biogenesis"/>
    <property type="evidence" value="ECO:0007669"/>
    <property type="project" value="UniProtKB-UniRule"/>
</dbReference>
<dbReference type="CDD" id="cd01898">
    <property type="entry name" value="Obg"/>
    <property type="match status" value="1"/>
</dbReference>
<dbReference type="FunFam" id="2.70.210.12:FF:000001">
    <property type="entry name" value="GTPase Obg"/>
    <property type="match status" value="1"/>
</dbReference>
<dbReference type="Gene3D" id="2.70.210.12">
    <property type="entry name" value="GTP1/OBG domain"/>
    <property type="match status" value="1"/>
</dbReference>
<dbReference type="Gene3D" id="3.40.50.300">
    <property type="entry name" value="P-loop containing nucleotide triphosphate hydrolases"/>
    <property type="match status" value="1"/>
</dbReference>
<dbReference type="HAMAP" id="MF_01454">
    <property type="entry name" value="GTPase_Obg"/>
    <property type="match status" value="1"/>
</dbReference>
<dbReference type="InterPro" id="IPR031167">
    <property type="entry name" value="G_OBG"/>
</dbReference>
<dbReference type="InterPro" id="IPR006073">
    <property type="entry name" value="GTP-bd"/>
</dbReference>
<dbReference type="InterPro" id="IPR014100">
    <property type="entry name" value="GTP-bd_Obg/CgtA"/>
</dbReference>
<dbReference type="InterPro" id="IPR006074">
    <property type="entry name" value="GTP1-OBG_CS"/>
</dbReference>
<dbReference type="InterPro" id="IPR006169">
    <property type="entry name" value="GTP1_OBG_dom"/>
</dbReference>
<dbReference type="InterPro" id="IPR036726">
    <property type="entry name" value="GTP1_OBG_dom_sf"/>
</dbReference>
<dbReference type="InterPro" id="IPR045086">
    <property type="entry name" value="OBG_GTPase"/>
</dbReference>
<dbReference type="InterPro" id="IPR027417">
    <property type="entry name" value="P-loop_NTPase"/>
</dbReference>
<dbReference type="InterPro" id="IPR005225">
    <property type="entry name" value="Small_GTP-bd"/>
</dbReference>
<dbReference type="NCBIfam" id="TIGR02729">
    <property type="entry name" value="Obg_CgtA"/>
    <property type="match status" value="1"/>
</dbReference>
<dbReference type="NCBIfam" id="NF008955">
    <property type="entry name" value="PRK12297.1"/>
    <property type="match status" value="1"/>
</dbReference>
<dbReference type="NCBIfam" id="NF008956">
    <property type="entry name" value="PRK12299.1"/>
    <property type="match status" value="1"/>
</dbReference>
<dbReference type="NCBIfam" id="TIGR00231">
    <property type="entry name" value="small_GTP"/>
    <property type="match status" value="1"/>
</dbReference>
<dbReference type="PANTHER" id="PTHR11702">
    <property type="entry name" value="DEVELOPMENTALLY REGULATED GTP-BINDING PROTEIN-RELATED"/>
    <property type="match status" value="1"/>
</dbReference>
<dbReference type="PANTHER" id="PTHR11702:SF31">
    <property type="entry name" value="MITOCHONDRIAL RIBOSOME-ASSOCIATED GTPASE 2"/>
    <property type="match status" value="1"/>
</dbReference>
<dbReference type="Pfam" id="PF01018">
    <property type="entry name" value="GTP1_OBG"/>
    <property type="match status" value="1"/>
</dbReference>
<dbReference type="Pfam" id="PF01926">
    <property type="entry name" value="MMR_HSR1"/>
    <property type="match status" value="1"/>
</dbReference>
<dbReference type="PIRSF" id="PIRSF002401">
    <property type="entry name" value="GTP_bd_Obg/CgtA"/>
    <property type="match status" value="1"/>
</dbReference>
<dbReference type="PRINTS" id="PR00326">
    <property type="entry name" value="GTP1OBG"/>
</dbReference>
<dbReference type="SUPFAM" id="SSF82051">
    <property type="entry name" value="Obg GTP-binding protein N-terminal domain"/>
    <property type="match status" value="1"/>
</dbReference>
<dbReference type="SUPFAM" id="SSF52540">
    <property type="entry name" value="P-loop containing nucleoside triphosphate hydrolases"/>
    <property type="match status" value="1"/>
</dbReference>
<dbReference type="PROSITE" id="PS51710">
    <property type="entry name" value="G_OBG"/>
    <property type="match status" value="1"/>
</dbReference>
<dbReference type="PROSITE" id="PS00905">
    <property type="entry name" value="GTP1_OBG"/>
    <property type="match status" value="1"/>
</dbReference>
<dbReference type="PROSITE" id="PS51883">
    <property type="entry name" value="OBG"/>
    <property type="match status" value="1"/>
</dbReference>
<organism>
    <name type="scientific">Rhizobium johnstonii (strain DSM 114642 / LMG 32736 / 3841)</name>
    <name type="common">Rhizobium leguminosarum bv. viciae</name>
    <dbReference type="NCBI Taxonomy" id="216596"/>
    <lineage>
        <taxon>Bacteria</taxon>
        <taxon>Pseudomonadati</taxon>
        <taxon>Pseudomonadota</taxon>
        <taxon>Alphaproteobacteria</taxon>
        <taxon>Hyphomicrobiales</taxon>
        <taxon>Rhizobiaceae</taxon>
        <taxon>Rhizobium/Agrobacterium group</taxon>
        <taxon>Rhizobium</taxon>
        <taxon>Rhizobium johnstonii</taxon>
    </lineage>
</organism>